<sequence length="548" mass="63293">MKNINPTKTKSWNLLKKHFNNMKKVNIKDLFEKDKNRFSSFSICFDDIILIDYSKNIITKETIKKLIQLAKECDLNNAILSMFCGKKINYTENRAVLHTALRNHKNISIEIDGINIIPKIKKVLNKMKNFCSDLIDGNWKGFTGERITHIVNIGIGGSDLGPYMVTEALKFYKNHLNVYFVSNIDGTHITEILKYLSPKNTLFLIASKTFTTQETITNAYSAKDWFLKYAKDKKYLSRHFIALSSNIDEVKKFGINTENIFELWNWVGGRYSLWSCMGLSIALSIGFNNFEKLLRGAYAMDQHFLKQPFEKNIPIILGLISIWYNNFFNFETESILVYDQYMHLFSSYFQQVNMESNGKSIDRNGNLVNYQTGSILWGGYGTNSQHAFYQLMHQGTKIVPCDFIVPIISHNPVSDHHQKLLANFFAQTKALAFGKKSENNHIKLYKYDSNKIKILPFKILPGNRPTNSILIKEINPYNLGSLIAMYEHKIFTQGVVLNINSFDQWGVELGKQLSKKLFSILRKEKILNTSSYDSSTNGLINFYKLWKK</sequence>
<dbReference type="EC" id="5.3.1.9" evidence="1"/>
<dbReference type="EMBL" id="BA000021">
    <property type="protein sequence ID" value="BAC24744.1"/>
    <property type="molecule type" value="Genomic_DNA"/>
</dbReference>
<dbReference type="SMR" id="Q8D1V8"/>
<dbReference type="STRING" id="36870.gene:10369112"/>
<dbReference type="KEGG" id="wbr:pgi"/>
<dbReference type="eggNOG" id="COG0166">
    <property type="taxonomic scope" value="Bacteria"/>
</dbReference>
<dbReference type="HOGENOM" id="CLU_017947_3_1_6"/>
<dbReference type="OrthoDB" id="140919at2"/>
<dbReference type="UniPathway" id="UPA00109">
    <property type="reaction ID" value="UER00181"/>
</dbReference>
<dbReference type="UniPathway" id="UPA00138"/>
<dbReference type="Proteomes" id="UP000000562">
    <property type="component" value="Chromosome"/>
</dbReference>
<dbReference type="GO" id="GO:0005829">
    <property type="term" value="C:cytosol"/>
    <property type="evidence" value="ECO:0007669"/>
    <property type="project" value="TreeGrafter"/>
</dbReference>
<dbReference type="GO" id="GO:0097367">
    <property type="term" value="F:carbohydrate derivative binding"/>
    <property type="evidence" value="ECO:0007669"/>
    <property type="project" value="InterPro"/>
</dbReference>
<dbReference type="GO" id="GO:0004347">
    <property type="term" value="F:glucose-6-phosphate isomerase activity"/>
    <property type="evidence" value="ECO:0007669"/>
    <property type="project" value="UniProtKB-UniRule"/>
</dbReference>
<dbReference type="GO" id="GO:0048029">
    <property type="term" value="F:monosaccharide binding"/>
    <property type="evidence" value="ECO:0007669"/>
    <property type="project" value="TreeGrafter"/>
</dbReference>
<dbReference type="GO" id="GO:0006094">
    <property type="term" value="P:gluconeogenesis"/>
    <property type="evidence" value="ECO:0007669"/>
    <property type="project" value="UniProtKB-UniRule"/>
</dbReference>
<dbReference type="GO" id="GO:0051156">
    <property type="term" value="P:glucose 6-phosphate metabolic process"/>
    <property type="evidence" value="ECO:0007669"/>
    <property type="project" value="TreeGrafter"/>
</dbReference>
<dbReference type="GO" id="GO:0006096">
    <property type="term" value="P:glycolytic process"/>
    <property type="evidence" value="ECO:0007669"/>
    <property type="project" value="UniProtKB-UniRule"/>
</dbReference>
<dbReference type="CDD" id="cd05015">
    <property type="entry name" value="SIS_PGI_1"/>
    <property type="match status" value="1"/>
</dbReference>
<dbReference type="CDD" id="cd05016">
    <property type="entry name" value="SIS_PGI_2"/>
    <property type="match status" value="1"/>
</dbReference>
<dbReference type="FunFam" id="3.40.50.10490:FF:000004">
    <property type="entry name" value="Glucose-6-phosphate isomerase"/>
    <property type="match status" value="1"/>
</dbReference>
<dbReference type="Gene3D" id="1.10.1390.10">
    <property type="match status" value="1"/>
</dbReference>
<dbReference type="Gene3D" id="3.40.50.10490">
    <property type="entry name" value="Glucose-6-phosphate isomerase like protein, domain 1"/>
    <property type="match status" value="2"/>
</dbReference>
<dbReference type="HAMAP" id="MF_00473">
    <property type="entry name" value="G6P_isomerase"/>
    <property type="match status" value="1"/>
</dbReference>
<dbReference type="InterPro" id="IPR001672">
    <property type="entry name" value="G6P_Isomerase"/>
</dbReference>
<dbReference type="InterPro" id="IPR023096">
    <property type="entry name" value="G6P_Isomerase_C"/>
</dbReference>
<dbReference type="InterPro" id="IPR018189">
    <property type="entry name" value="Phosphoglucose_isomerase_CS"/>
</dbReference>
<dbReference type="InterPro" id="IPR046348">
    <property type="entry name" value="SIS_dom_sf"/>
</dbReference>
<dbReference type="InterPro" id="IPR035476">
    <property type="entry name" value="SIS_PGI_1"/>
</dbReference>
<dbReference type="InterPro" id="IPR035482">
    <property type="entry name" value="SIS_PGI_2"/>
</dbReference>
<dbReference type="NCBIfam" id="NF001211">
    <property type="entry name" value="PRK00179.1"/>
    <property type="match status" value="1"/>
</dbReference>
<dbReference type="PANTHER" id="PTHR11469">
    <property type="entry name" value="GLUCOSE-6-PHOSPHATE ISOMERASE"/>
    <property type="match status" value="1"/>
</dbReference>
<dbReference type="PANTHER" id="PTHR11469:SF1">
    <property type="entry name" value="GLUCOSE-6-PHOSPHATE ISOMERASE"/>
    <property type="match status" value="1"/>
</dbReference>
<dbReference type="Pfam" id="PF00342">
    <property type="entry name" value="PGI"/>
    <property type="match status" value="1"/>
</dbReference>
<dbReference type="PRINTS" id="PR00662">
    <property type="entry name" value="G6PISOMERASE"/>
</dbReference>
<dbReference type="SUPFAM" id="SSF53697">
    <property type="entry name" value="SIS domain"/>
    <property type="match status" value="1"/>
</dbReference>
<dbReference type="PROSITE" id="PS00765">
    <property type="entry name" value="P_GLUCOSE_ISOMERASE_1"/>
    <property type="match status" value="1"/>
</dbReference>
<dbReference type="PROSITE" id="PS00174">
    <property type="entry name" value="P_GLUCOSE_ISOMERASE_2"/>
    <property type="match status" value="1"/>
</dbReference>
<dbReference type="PROSITE" id="PS51463">
    <property type="entry name" value="P_GLUCOSE_ISOMERASE_3"/>
    <property type="match status" value="1"/>
</dbReference>
<comment type="function">
    <text evidence="1">Catalyzes the reversible isomerization of glucose-6-phosphate to fructose-6-phosphate.</text>
</comment>
<comment type="catalytic activity">
    <reaction evidence="1">
        <text>alpha-D-glucose 6-phosphate = beta-D-fructose 6-phosphate</text>
        <dbReference type="Rhea" id="RHEA:11816"/>
        <dbReference type="ChEBI" id="CHEBI:57634"/>
        <dbReference type="ChEBI" id="CHEBI:58225"/>
        <dbReference type="EC" id="5.3.1.9"/>
    </reaction>
</comment>
<comment type="pathway">
    <text evidence="1">Carbohydrate biosynthesis; gluconeogenesis.</text>
</comment>
<comment type="pathway">
    <text evidence="1">Carbohydrate degradation; glycolysis; D-glyceraldehyde 3-phosphate and glycerone phosphate from D-glucose: step 2/4.</text>
</comment>
<comment type="subcellular location">
    <subcellularLocation>
        <location evidence="1">Cytoplasm</location>
    </subcellularLocation>
</comment>
<comment type="similarity">
    <text evidence="1">Belongs to the GPI family.</text>
</comment>
<gene>
    <name evidence="1" type="primary">pgi</name>
    <name type="ordered locus">WIGBR5980</name>
</gene>
<proteinExistence type="inferred from homology"/>
<protein>
    <recommendedName>
        <fullName evidence="1">Glucose-6-phosphate isomerase</fullName>
        <shortName evidence="1">GPI</shortName>
        <ecNumber evidence="1">5.3.1.9</ecNumber>
    </recommendedName>
    <alternativeName>
        <fullName evidence="1">Phosphoglucose isomerase</fullName>
        <shortName evidence="1">PGI</shortName>
    </alternativeName>
    <alternativeName>
        <fullName evidence="1">Phosphohexose isomerase</fullName>
        <shortName evidence="1">PHI</shortName>
    </alternativeName>
</protein>
<reference key="1">
    <citation type="journal article" date="2002" name="Nat. Genet.">
        <title>Genome sequence of the endocellular obligate symbiont of tsetse flies, Wigglesworthia glossinidia.</title>
        <authorList>
            <person name="Akman L."/>
            <person name="Yamashita A."/>
            <person name="Watanabe H."/>
            <person name="Oshima K."/>
            <person name="Shiba T."/>
            <person name="Hattori M."/>
            <person name="Aksoy S."/>
        </authorList>
    </citation>
    <scope>NUCLEOTIDE SEQUENCE [LARGE SCALE GENOMIC DNA]</scope>
</reference>
<feature type="chain" id="PRO_0000180767" description="Glucose-6-phosphate isomerase">
    <location>
        <begin position="1"/>
        <end position="548"/>
    </location>
</feature>
<feature type="active site" description="Proton donor" evidence="1">
    <location>
        <position position="355"/>
    </location>
</feature>
<feature type="active site" evidence="1">
    <location>
        <position position="386"/>
    </location>
</feature>
<feature type="active site" evidence="1">
    <location>
        <position position="511"/>
    </location>
</feature>
<evidence type="ECO:0000255" key="1">
    <source>
        <dbReference type="HAMAP-Rule" id="MF_00473"/>
    </source>
</evidence>
<accession>Q8D1V8</accession>
<keyword id="KW-0963">Cytoplasm</keyword>
<keyword id="KW-0312">Gluconeogenesis</keyword>
<keyword id="KW-0324">Glycolysis</keyword>
<keyword id="KW-0413">Isomerase</keyword>
<keyword id="KW-1185">Reference proteome</keyword>
<name>G6PI_WIGBR</name>
<organism>
    <name type="scientific">Wigglesworthia glossinidia brevipalpis</name>
    <dbReference type="NCBI Taxonomy" id="36870"/>
    <lineage>
        <taxon>Bacteria</taxon>
        <taxon>Pseudomonadati</taxon>
        <taxon>Pseudomonadota</taxon>
        <taxon>Gammaproteobacteria</taxon>
        <taxon>Enterobacterales</taxon>
        <taxon>Erwiniaceae</taxon>
        <taxon>Wigglesworthia</taxon>
    </lineage>
</organism>